<proteinExistence type="evidence at transcript level"/>
<dbReference type="EMBL" id="JX948115">
    <property type="protein sequence ID" value="AGS36144.1"/>
    <property type="molecule type" value="mRNA"/>
</dbReference>
<dbReference type="SMR" id="U5KJJ1"/>
<dbReference type="Proteomes" id="UP000472273">
    <property type="component" value="Unplaced"/>
</dbReference>
<dbReference type="GO" id="GO:0005615">
    <property type="term" value="C:extracellular space"/>
    <property type="evidence" value="ECO:0007669"/>
    <property type="project" value="TreeGrafter"/>
</dbReference>
<dbReference type="GO" id="GO:0016020">
    <property type="term" value="C:membrane"/>
    <property type="evidence" value="ECO:0007669"/>
    <property type="project" value="UniProtKB-KW"/>
</dbReference>
<dbReference type="GO" id="GO:0044218">
    <property type="term" value="C:other organism cell membrane"/>
    <property type="evidence" value="ECO:0007669"/>
    <property type="project" value="UniProtKB-KW"/>
</dbReference>
<dbReference type="GO" id="GO:0042742">
    <property type="term" value="P:defense response to bacterium"/>
    <property type="evidence" value="ECO:0007669"/>
    <property type="project" value="UniProtKB-KW"/>
</dbReference>
<dbReference type="GO" id="GO:0031640">
    <property type="term" value="P:killing of cells of another organism"/>
    <property type="evidence" value="ECO:0007669"/>
    <property type="project" value="UniProtKB-KW"/>
</dbReference>
<dbReference type="FunFam" id="3.10.450.10:FF:000034">
    <property type="entry name" value="Cathelicidin-related peptide Oh-Cath"/>
    <property type="match status" value="1"/>
</dbReference>
<dbReference type="Gene3D" id="3.10.450.10">
    <property type="match status" value="1"/>
</dbReference>
<dbReference type="InterPro" id="IPR001894">
    <property type="entry name" value="Cathelicidin-like"/>
</dbReference>
<dbReference type="InterPro" id="IPR046350">
    <property type="entry name" value="Cystatin_sf"/>
</dbReference>
<dbReference type="PANTHER" id="PTHR10206">
    <property type="entry name" value="CATHELICIDIN"/>
    <property type="match status" value="1"/>
</dbReference>
<dbReference type="PANTHER" id="PTHR10206:SF4">
    <property type="entry name" value="NEUTROPHILIC GRANULE PROTEIN"/>
    <property type="match status" value="1"/>
</dbReference>
<dbReference type="Pfam" id="PF00666">
    <property type="entry name" value="Cathelicidins"/>
    <property type="match status" value="1"/>
</dbReference>
<dbReference type="SUPFAM" id="SSF54403">
    <property type="entry name" value="Cystatin/monellin"/>
    <property type="match status" value="1"/>
</dbReference>
<organism>
    <name type="scientific">Pseudonaja textilis</name>
    <name type="common">Eastern brown snake</name>
    <dbReference type="NCBI Taxonomy" id="8673"/>
    <lineage>
        <taxon>Eukaryota</taxon>
        <taxon>Metazoa</taxon>
        <taxon>Chordata</taxon>
        <taxon>Craniata</taxon>
        <taxon>Vertebrata</taxon>
        <taxon>Euteleostomi</taxon>
        <taxon>Lepidosauria</taxon>
        <taxon>Squamata</taxon>
        <taxon>Bifurcata</taxon>
        <taxon>Unidentata</taxon>
        <taxon>Episquamata</taxon>
        <taxon>Toxicofera</taxon>
        <taxon>Serpentes</taxon>
        <taxon>Colubroidea</taxon>
        <taxon>Elapidae</taxon>
        <taxon>Hydrophiinae</taxon>
        <taxon>Pseudonaja</taxon>
    </lineage>
</organism>
<reference key="1">
    <citation type="journal article" date="2014" name="Amino Acids">
        <title>Vipericidins: a novel family of cathelicidin-related peptides from the venom gland of South American pit vipers.</title>
        <authorList>
            <person name="Falcao C.B."/>
            <person name="de La Torre B.G."/>
            <person name="Perez-Peinado C."/>
            <person name="Barron A.E."/>
            <person name="Andreu D."/>
            <person name="Radis-Baptista G."/>
        </authorList>
    </citation>
    <scope>NUCLEOTIDE SEQUENCE [MRNA]</scope>
    <scope>SYNTHESIS OF 151-184</scope>
    <scope>FUNCTION</scope>
    <scope>TISSUE SPECIFICITY</scope>
    <source>
        <tissue>Venom gland</tissue>
    </source>
</reference>
<name>CAMP1_PSETE</name>
<sequence>MEGFFWKTWLVVAAFAIGGTSSLPHKPLTYEEAVDLAVSTYNGKSGEESLYRLLEAVPPPKWDPLSESNQELNLTIKETVCLVAEERSLEECDFQDDGAVMGCTGYFFFGESPPVLVLTCEPLGEDEEQNQEEEEEEEKEEDEKDQPRRVKRFKKFFMKLKKSVKKRVMKFFKKPMVIGVTFPF</sequence>
<feature type="signal peptide" evidence="3">
    <location>
        <begin position="1"/>
        <end position="22"/>
    </location>
</feature>
<feature type="propeptide" id="PRO_0000432139" evidence="8">
    <location>
        <begin position="23"/>
        <end position="150"/>
    </location>
</feature>
<feature type="peptide" id="PRO_0000432140" description="Cathelicidin-related peptide Pt_CRAMP1" evidence="8">
    <location>
        <begin position="151"/>
        <end position="184"/>
    </location>
</feature>
<feature type="region of interest" description="Disordered" evidence="4">
    <location>
        <begin position="125"/>
        <end position="147"/>
    </location>
</feature>
<feature type="compositionally biased region" description="Acidic residues" evidence="4">
    <location>
        <begin position="125"/>
        <end position="144"/>
    </location>
</feature>
<feature type="disulfide bond" evidence="1">
    <location>
        <begin position="81"/>
        <end position="92"/>
    </location>
</feature>
<feature type="disulfide bond" evidence="1">
    <location>
        <begin position="103"/>
        <end position="120"/>
    </location>
</feature>
<keyword id="KW-0044">Antibiotic</keyword>
<keyword id="KW-0929">Antimicrobial</keyword>
<keyword id="KW-0165">Cleavage on pair of basic residues</keyword>
<keyword id="KW-0204">Cytolysis</keyword>
<keyword id="KW-1015">Disulfide bond</keyword>
<keyword id="KW-0354">Hemolysis</keyword>
<keyword id="KW-0472">Membrane</keyword>
<keyword id="KW-1185">Reference proteome</keyword>
<keyword id="KW-0964">Secreted</keyword>
<keyword id="KW-0732">Signal</keyword>
<keyword id="KW-1052">Target cell membrane</keyword>
<keyword id="KW-1053">Target membrane</keyword>
<comment type="function">
    <text evidence="2 5">Potent antimicrobial peptide against Gram-negative (MIC=2 ug/ml against E.coli ATCC 25922, MIC=8 ug/ml against P.aeruginosa) and Gram-positive bacteria (MIC=32 ug/ml against E.faecalis, MIC=32 ug/ml against S.aureus) (PubMed:25100358). Adopts an amphipathic alpha helical conformation, that may allow to partition into the target membrane (By similarity). High hemolytic activities have been observed on mammalian cells (PubMed:25100358).</text>
</comment>
<comment type="subcellular location">
    <subcellularLocation>
        <location evidence="2">Secreted</location>
    </subcellularLocation>
    <subcellularLocation>
        <location evidence="2">Target cell membrane</location>
    </subcellularLocation>
    <text evidence="2">Forms a helical membrane channel in the prey.</text>
</comment>
<comment type="tissue specificity">
    <text evidence="5">Expressed by the venom gland.</text>
</comment>
<comment type="miscellaneous">
    <text evidence="8">The putative mature sequence has been predicted by AMPA, a predictive algorithm for identification of peptide stretches with antimicrobial properties.</text>
</comment>
<comment type="similarity">
    <text evidence="7">Belongs to the cathelicidin family.</text>
</comment>
<protein>
    <recommendedName>
        <fullName evidence="6">Cathelicidin-related peptide Pt_CRAMP1</fullName>
    </recommendedName>
    <alternativeName>
        <fullName evidence="6">Cathelicidin-related antimicrobial peptide</fullName>
        <shortName evidence="6">CRAMP</shortName>
    </alternativeName>
    <alternativeName>
        <fullName evidence="6">Vipericidin</fullName>
    </alternativeName>
</protein>
<evidence type="ECO:0000250" key="1"/>
<evidence type="ECO:0000250" key="2">
    <source>
        <dbReference type="UniProtKB" id="B6D434"/>
    </source>
</evidence>
<evidence type="ECO:0000255" key="3"/>
<evidence type="ECO:0000256" key="4">
    <source>
        <dbReference type="SAM" id="MobiDB-lite"/>
    </source>
</evidence>
<evidence type="ECO:0000269" key="5">
    <source>
    </source>
</evidence>
<evidence type="ECO:0000303" key="6">
    <source>
    </source>
</evidence>
<evidence type="ECO:0000305" key="7"/>
<evidence type="ECO:0000305" key="8">
    <source>
    </source>
</evidence>
<accession>U5KJJ1</accession>